<keyword id="KW-0472">Membrane</keyword>
<keyword id="KW-1185">Reference proteome</keyword>
<keyword id="KW-0812">Transmembrane</keyword>
<keyword id="KW-1133">Transmembrane helix</keyword>
<proteinExistence type="predicted"/>
<gene>
    <name type="ordered locus">YHR180W</name>
</gene>
<protein>
    <recommendedName>
        <fullName>Uncharacterized protein YHR180W</fullName>
    </recommendedName>
</protein>
<accession>P38868</accession>
<accession>A0A1S0T004</accession>
<name>YHY0_YEAST</name>
<sequence>MEMHWITLVAFIATFFNLAATSINNSSLPDVDLTNPLRFFTNIPAGLNFNEVIFLERNGFYLGGIDSPSIYHLINGTAVYFGDVRDNIMPGTVGTTRNVTDVDYGSLLTEYGYEANTDYVSRWIATHVVISPLNATEFFQTPVPVPVPVPITILHQQVNSKLH</sequence>
<dbReference type="EMBL" id="U00028">
    <property type="protein sequence ID" value="AAB68455.1"/>
    <property type="molecule type" value="Genomic_DNA"/>
</dbReference>
<dbReference type="EMBL" id="AY558304">
    <property type="protein sequence ID" value="AAS56630.1"/>
    <property type="molecule type" value="Genomic_DNA"/>
</dbReference>
<dbReference type="EMBL" id="BK006934">
    <property type="protein sequence ID" value="DAA80263.1"/>
    <property type="molecule type" value="Genomic_DNA"/>
</dbReference>
<dbReference type="PIR" id="S46674">
    <property type="entry name" value="S46674"/>
</dbReference>
<dbReference type="RefSeq" id="NP_001335743.1">
    <property type="nucleotide sequence ID" value="NM_001348842.1"/>
</dbReference>
<dbReference type="DIP" id="DIP-4332N"/>
<dbReference type="FunCoup" id="P38868">
    <property type="interactions" value="31"/>
</dbReference>
<dbReference type="IntAct" id="P38868">
    <property type="interactions" value="2"/>
</dbReference>
<dbReference type="STRING" id="4932.YHR180W"/>
<dbReference type="PaxDb" id="4932-YHR180W"/>
<dbReference type="EnsemblFungi" id="YHR180W_mRNA">
    <property type="protein sequence ID" value="YHR180W"/>
    <property type="gene ID" value="YHR180W"/>
</dbReference>
<dbReference type="GeneID" id="856585"/>
<dbReference type="AGR" id="SGD:S000001223"/>
<dbReference type="SGD" id="S000001223">
    <property type="gene designation" value="YHR180W"/>
</dbReference>
<dbReference type="HOGENOM" id="CLU_1645058_0_0_1"/>
<dbReference type="InParanoid" id="P38868"/>
<dbReference type="OrthoDB" id="4043166at2759"/>
<dbReference type="PRO" id="PR:P38868"/>
<dbReference type="Proteomes" id="UP000002311">
    <property type="component" value="Chromosome VIII"/>
</dbReference>
<dbReference type="RNAct" id="P38868">
    <property type="molecule type" value="protein"/>
</dbReference>
<dbReference type="GO" id="GO:0016020">
    <property type="term" value="C:membrane"/>
    <property type="evidence" value="ECO:0007669"/>
    <property type="project" value="UniProtKB-SubCell"/>
</dbReference>
<evidence type="ECO:0000255" key="1"/>
<evidence type="ECO:0000305" key="2"/>
<comment type="subcellular location">
    <subcellularLocation>
        <location evidence="2">Membrane</location>
        <topology evidence="2">Single-pass membrane protein</topology>
    </subcellularLocation>
</comment>
<feature type="chain" id="PRO_0000202933" description="Uncharacterized protein YHR180W">
    <location>
        <begin position="1"/>
        <end position="163"/>
    </location>
</feature>
<feature type="transmembrane region" description="Helical" evidence="1">
    <location>
        <begin position="7"/>
        <end position="23"/>
    </location>
</feature>
<reference key="1">
    <citation type="journal article" date="1994" name="Science">
        <title>Complete nucleotide sequence of Saccharomyces cerevisiae chromosome VIII.</title>
        <authorList>
            <person name="Johnston M."/>
            <person name="Andrews S."/>
            <person name="Brinkman R."/>
            <person name="Cooper J."/>
            <person name="Ding H."/>
            <person name="Dover J."/>
            <person name="Du Z."/>
            <person name="Favello A."/>
            <person name="Fulton L."/>
            <person name="Gattung S."/>
            <person name="Geisel C."/>
            <person name="Kirsten J."/>
            <person name="Kucaba T."/>
            <person name="Hillier L.W."/>
            <person name="Jier M."/>
            <person name="Johnston L."/>
            <person name="Langston Y."/>
            <person name="Latreille P."/>
            <person name="Louis E.J."/>
            <person name="Macri C."/>
            <person name="Mardis E."/>
            <person name="Menezes S."/>
            <person name="Mouser L."/>
            <person name="Nhan M."/>
            <person name="Rifkin L."/>
            <person name="Riles L."/>
            <person name="St Peter H."/>
            <person name="Trevaskis E."/>
            <person name="Vaughan K."/>
            <person name="Vignati D."/>
            <person name="Wilcox L."/>
            <person name="Wohldman P."/>
            <person name="Waterston R."/>
            <person name="Wilson R."/>
            <person name="Vaudin M."/>
        </authorList>
    </citation>
    <scope>NUCLEOTIDE SEQUENCE [LARGE SCALE GENOMIC DNA]</scope>
    <source>
        <strain>ATCC 204508 / S288c</strain>
    </source>
</reference>
<reference key="2">
    <citation type="journal article" date="2014" name="G3 (Bethesda)">
        <title>The reference genome sequence of Saccharomyces cerevisiae: Then and now.</title>
        <authorList>
            <person name="Engel S.R."/>
            <person name="Dietrich F.S."/>
            <person name="Fisk D.G."/>
            <person name="Binkley G."/>
            <person name="Balakrishnan R."/>
            <person name="Costanzo M.C."/>
            <person name="Dwight S.S."/>
            <person name="Hitz B.C."/>
            <person name="Karra K."/>
            <person name="Nash R.S."/>
            <person name="Weng S."/>
            <person name="Wong E.D."/>
            <person name="Lloyd P."/>
            <person name="Skrzypek M.S."/>
            <person name="Miyasato S.R."/>
            <person name="Simison M."/>
            <person name="Cherry J.M."/>
        </authorList>
    </citation>
    <scope>GENOME REANNOTATION</scope>
    <source>
        <strain>ATCC 204508 / S288c</strain>
    </source>
</reference>
<reference key="3">
    <citation type="journal article" date="2007" name="Genome Res.">
        <title>Approaching a complete repository of sequence-verified protein-encoding clones for Saccharomyces cerevisiae.</title>
        <authorList>
            <person name="Hu Y."/>
            <person name="Rolfs A."/>
            <person name="Bhullar B."/>
            <person name="Murthy T.V.S."/>
            <person name="Zhu C."/>
            <person name="Berger M.F."/>
            <person name="Camargo A.A."/>
            <person name="Kelley F."/>
            <person name="McCarron S."/>
            <person name="Jepson D."/>
            <person name="Richardson A."/>
            <person name="Raphael J."/>
            <person name="Moreira D."/>
            <person name="Taycher E."/>
            <person name="Zuo D."/>
            <person name="Mohr S."/>
            <person name="Kane M.F."/>
            <person name="Williamson J."/>
            <person name="Simpson A.J.G."/>
            <person name="Bulyk M.L."/>
            <person name="Harlow E."/>
            <person name="Marsischky G."/>
            <person name="Kolodner R.D."/>
            <person name="LaBaer J."/>
        </authorList>
    </citation>
    <scope>NUCLEOTIDE SEQUENCE [GENOMIC DNA]</scope>
    <source>
        <strain>ATCC 204508 / S288c</strain>
    </source>
</reference>
<organism>
    <name type="scientific">Saccharomyces cerevisiae (strain ATCC 204508 / S288c)</name>
    <name type="common">Baker's yeast</name>
    <dbReference type="NCBI Taxonomy" id="559292"/>
    <lineage>
        <taxon>Eukaryota</taxon>
        <taxon>Fungi</taxon>
        <taxon>Dikarya</taxon>
        <taxon>Ascomycota</taxon>
        <taxon>Saccharomycotina</taxon>
        <taxon>Saccharomycetes</taxon>
        <taxon>Saccharomycetales</taxon>
        <taxon>Saccharomycetaceae</taxon>
        <taxon>Saccharomyces</taxon>
    </lineage>
</organism>